<feature type="chain" id="PRO_1000070585" description="Arginine exporter protein ArgO">
    <location>
        <begin position="1"/>
        <end position="205"/>
    </location>
</feature>
<feature type="transmembrane region" description="Helical" evidence="1">
    <location>
        <begin position="1"/>
        <end position="21"/>
    </location>
</feature>
<feature type="transmembrane region" description="Helical" evidence="1">
    <location>
        <begin position="42"/>
        <end position="62"/>
    </location>
</feature>
<feature type="transmembrane region" description="Helical" evidence="1">
    <location>
        <begin position="67"/>
        <end position="87"/>
    </location>
</feature>
<feature type="transmembrane region" description="Helical" evidence="1">
    <location>
        <begin position="111"/>
        <end position="131"/>
    </location>
</feature>
<feature type="transmembrane region" description="Helical" evidence="1">
    <location>
        <begin position="147"/>
        <end position="167"/>
    </location>
</feature>
<feature type="transmembrane region" description="Helical" evidence="1">
    <location>
        <begin position="185"/>
        <end position="205"/>
    </location>
</feature>
<comment type="function">
    <text evidence="1">Involved in the export of arginine. Important to control the intracellular level of arginine and the correct balance between arginine and lysine.</text>
</comment>
<comment type="catalytic activity">
    <reaction evidence="1">
        <text>L-arginine(in) = L-arginine(out)</text>
        <dbReference type="Rhea" id="RHEA:32143"/>
        <dbReference type="ChEBI" id="CHEBI:32682"/>
    </reaction>
    <physiologicalReaction direction="left-to-right" evidence="1">
        <dbReference type="Rhea" id="RHEA:32144"/>
    </physiologicalReaction>
</comment>
<comment type="subcellular location">
    <subcellularLocation>
        <location evidence="1">Cell inner membrane</location>
        <topology evidence="1">Multi-pass membrane protein</topology>
    </subcellularLocation>
</comment>
<comment type="similarity">
    <text evidence="1">Belongs to the LysE/ArgO transporter (TC 2.A.75) family.</text>
</comment>
<keyword id="KW-0029">Amino-acid transport</keyword>
<keyword id="KW-0997">Cell inner membrane</keyword>
<keyword id="KW-1003">Cell membrane</keyword>
<keyword id="KW-0472">Membrane</keyword>
<keyword id="KW-0812">Transmembrane</keyword>
<keyword id="KW-1133">Transmembrane helix</keyword>
<keyword id="KW-0813">Transport</keyword>
<reference key="1">
    <citation type="journal article" date="2006" name="J. Bacteriol.">
        <title>Complete genome sequence of Yersinia pestis strains Antiqua and Nepal516: evidence of gene reduction in an emerging pathogen.</title>
        <authorList>
            <person name="Chain P.S.G."/>
            <person name="Hu P."/>
            <person name="Malfatti S.A."/>
            <person name="Radnedge L."/>
            <person name="Larimer F."/>
            <person name="Vergez L.M."/>
            <person name="Worsham P."/>
            <person name="Chu M.C."/>
            <person name="Andersen G.L."/>
        </authorList>
    </citation>
    <scope>NUCLEOTIDE SEQUENCE [LARGE SCALE GENOMIC DNA]</scope>
    <source>
        <strain>Nepal516</strain>
    </source>
</reference>
<reference key="2">
    <citation type="submission" date="2009-04" db="EMBL/GenBank/DDBJ databases">
        <title>Yersinia pestis Nepal516A whole genome shotgun sequencing project.</title>
        <authorList>
            <person name="Plunkett G. III"/>
            <person name="Anderson B.D."/>
            <person name="Baumler D.J."/>
            <person name="Burland V."/>
            <person name="Cabot E.L."/>
            <person name="Glasner J.D."/>
            <person name="Mau B."/>
            <person name="Neeno-Eckwall E."/>
            <person name="Perna N.T."/>
            <person name="Munk A.C."/>
            <person name="Tapia R."/>
            <person name="Green L.D."/>
            <person name="Rogers Y.C."/>
            <person name="Detter J.C."/>
            <person name="Bruce D.C."/>
            <person name="Brettin T.S."/>
        </authorList>
    </citation>
    <scope>NUCLEOTIDE SEQUENCE [LARGE SCALE GENOMIC DNA]</scope>
    <source>
        <strain>Nepal516</strain>
    </source>
</reference>
<dbReference type="EMBL" id="CP000305">
    <property type="protein sequence ID" value="ABG19444.1"/>
    <property type="molecule type" value="Genomic_DNA"/>
</dbReference>
<dbReference type="EMBL" id="ACNQ01000017">
    <property type="protein sequence ID" value="EEO75608.1"/>
    <property type="molecule type" value="Genomic_DNA"/>
</dbReference>
<dbReference type="RefSeq" id="WP_002209960.1">
    <property type="nucleotide sequence ID" value="NZ_ACNQ01000017.1"/>
</dbReference>
<dbReference type="GeneID" id="57973722"/>
<dbReference type="KEGG" id="ypn:YPN_3117"/>
<dbReference type="HOGENOM" id="CLU_087840_0_1_6"/>
<dbReference type="Proteomes" id="UP000008936">
    <property type="component" value="Chromosome"/>
</dbReference>
<dbReference type="GO" id="GO:0005886">
    <property type="term" value="C:plasma membrane"/>
    <property type="evidence" value="ECO:0007669"/>
    <property type="project" value="UniProtKB-SubCell"/>
</dbReference>
<dbReference type="GO" id="GO:0061459">
    <property type="term" value="F:L-arginine transmembrane transporter activity"/>
    <property type="evidence" value="ECO:0007669"/>
    <property type="project" value="UniProtKB-UniRule"/>
</dbReference>
<dbReference type="HAMAP" id="MF_01901">
    <property type="entry name" value="ArgO"/>
    <property type="match status" value="1"/>
</dbReference>
<dbReference type="InterPro" id="IPR023445">
    <property type="entry name" value="Arg_export_ArgO_enterobac"/>
</dbReference>
<dbReference type="InterPro" id="IPR001123">
    <property type="entry name" value="LeuE-type"/>
</dbReference>
<dbReference type="InterPro" id="IPR004777">
    <property type="entry name" value="Lys/arg_exporter"/>
</dbReference>
<dbReference type="NCBIfam" id="TIGR00948">
    <property type="entry name" value="2a75"/>
    <property type="match status" value="1"/>
</dbReference>
<dbReference type="NCBIfam" id="NF006801">
    <property type="entry name" value="PRK09304.1"/>
    <property type="match status" value="1"/>
</dbReference>
<dbReference type="PANTHER" id="PTHR30086">
    <property type="entry name" value="ARGININE EXPORTER PROTEIN ARGO"/>
    <property type="match status" value="1"/>
</dbReference>
<dbReference type="PANTHER" id="PTHR30086:SF20">
    <property type="entry name" value="ARGININE EXPORTER PROTEIN ARGO-RELATED"/>
    <property type="match status" value="1"/>
</dbReference>
<dbReference type="Pfam" id="PF01810">
    <property type="entry name" value="LysE"/>
    <property type="match status" value="1"/>
</dbReference>
<protein>
    <recommendedName>
        <fullName evidence="1">Arginine exporter protein ArgO</fullName>
    </recommendedName>
</protein>
<name>ARGO_YERPN</name>
<proteinExistence type="inferred from homology"/>
<organism>
    <name type="scientific">Yersinia pestis bv. Antiqua (strain Nepal516)</name>
    <dbReference type="NCBI Taxonomy" id="377628"/>
    <lineage>
        <taxon>Bacteria</taxon>
        <taxon>Pseudomonadati</taxon>
        <taxon>Pseudomonadota</taxon>
        <taxon>Gammaproteobacteria</taxon>
        <taxon>Enterobacterales</taxon>
        <taxon>Yersiniaceae</taxon>
        <taxon>Yersinia</taxon>
    </lineage>
</organism>
<evidence type="ECO:0000255" key="1">
    <source>
        <dbReference type="HAMAP-Rule" id="MF_01901"/>
    </source>
</evidence>
<sequence length="205" mass="22164">MLAVYLHGFILSAAMILPLGPQNVFVMNQGIKRQHHLMSASLCALSDIILICAGIFGGSALLSRSPLLLALVTWGGVAFLMWYGWGALMAAWRGDGVASSATSVTQGRWRILVTLLAVTWLNPHVYLDTFVVLGSLGGQLLPDIRPWFALGAVTASIVWFFALALLAAWLSPWLNRPVAQRIINLFVGGVMGFIAFQLARQGFGL</sequence>
<accession>Q1CEY6</accession>
<accession>C4GXF8</accession>
<gene>
    <name evidence="1" type="primary">argO</name>
    <name type="ordered locus">YPN_3117</name>
    <name type="ORF">YP516_3538</name>
</gene>